<comment type="function">
    <text evidence="1">Redox regulated molecular chaperone. Protects both thermally unfolding and oxidatively damaged proteins from irreversible aggregation. Plays an important role in the bacterial defense system toward oxidative stress.</text>
</comment>
<comment type="subcellular location">
    <subcellularLocation>
        <location evidence="1">Cytoplasm</location>
    </subcellularLocation>
</comment>
<comment type="PTM">
    <text evidence="1">Under oxidizing conditions two disulfide bonds are formed involving the reactive cysteines. Under reducing conditions zinc is bound to the reactive cysteines and the protein is inactive.</text>
</comment>
<comment type="similarity">
    <text evidence="1">Belongs to the HSP33 family.</text>
</comment>
<reference key="1">
    <citation type="submission" date="2007-02" db="EMBL/GenBank/DDBJ databases">
        <title>Complete sequence of chromosome of Yersinia pestis Pestoides F.</title>
        <authorList>
            <consortium name="US DOE Joint Genome Institute"/>
            <person name="Copeland A."/>
            <person name="Lucas S."/>
            <person name="Lapidus A."/>
            <person name="Barry K."/>
            <person name="Detter J.C."/>
            <person name="Glavina del Rio T."/>
            <person name="Hammon N."/>
            <person name="Israni S."/>
            <person name="Dalin E."/>
            <person name="Tice H."/>
            <person name="Pitluck S."/>
            <person name="Di Bartolo G."/>
            <person name="Chain P."/>
            <person name="Malfatti S."/>
            <person name="Shin M."/>
            <person name="Vergez L."/>
            <person name="Schmutz J."/>
            <person name="Larimer F."/>
            <person name="Land M."/>
            <person name="Hauser L."/>
            <person name="Worsham P."/>
            <person name="Chu M."/>
            <person name="Bearden S."/>
            <person name="Garcia E."/>
            <person name="Richardson P."/>
        </authorList>
    </citation>
    <scope>NUCLEOTIDE SEQUENCE [LARGE SCALE GENOMIC DNA]</scope>
    <source>
        <strain>Pestoides F</strain>
    </source>
</reference>
<proteinExistence type="inferred from homology"/>
<protein>
    <recommendedName>
        <fullName evidence="1">33 kDa chaperonin</fullName>
    </recommendedName>
    <alternativeName>
        <fullName evidence="1">Heat shock protein 33 homolog</fullName>
        <shortName evidence="1">HSP33</shortName>
    </alternativeName>
</protein>
<evidence type="ECO:0000255" key="1">
    <source>
        <dbReference type="HAMAP-Rule" id="MF_00117"/>
    </source>
</evidence>
<name>HSLO_YERPP</name>
<feature type="chain" id="PRO_1000015596" description="33 kDa chaperonin">
    <location>
        <begin position="1"/>
        <end position="293"/>
    </location>
</feature>
<feature type="disulfide bond" description="Redox-active" evidence="1">
    <location>
        <begin position="231"/>
        <end position="233"/>
    </location>
</feature>
<feature type="disulfide bond" description="Redox-active" evidence="1">
    <location>
        <begin position="264"/>
        <end position="267"/>
    </location>
</feature>
<accession>A4TGS9</accession>
<keyword id="KW-0143">Chaperone</keyword>
<keyword id="KW-0963">Cytoplasm</keyword>
<keyword id="KW-1015">Disulfide bond</keyword>
<keyword id="KW-0676">Redox-active center</keyword>
<keyword id="KW-0862">Zinc</keyword>
<sequence>MSNHDQLHRYLFANHAVRGELVSVNETYQQVLANHDYPPAVQKLLGEMLVATSLLTATLKFDGDITVQLQGGDGPLTLAVINGNNRQEMRGVARVKGEISDDSTLQEMVGNGYLVITITPAQGERYQGVVALEGETIAACLENYFMQSEQLPTRLFIRTGHVADKAAAGGMLLQVLPAQERNEDEFDHLAQLTATIKAEELFTLPANEVLYRLYHQEEVTLYEPQNVSFRCTCSRQRCADALVTLADDDVTEMLEQDGNIDMHCEYCGNHYLFDAVDIATLKNGNSASSEQIH</sequence>
<dbReference type="EMBL" id="CP000668">
    <property type="protein sequence ID" value="ABP38492.1"/>
    <property type="molecule type" value="Genomic_DNA"/>
</dbReference>
<dbReference type="RefSeq" id="WP_002208911.1">
    <property type="nucleotide sequence ID" value="NZ_CP009715.1"/>
</dbReference>
<dbReference type="SMR" id="A4TGS9"/>
<dbReference type="GeneID" id="57974461"/>
<dbReference type="KEGG" id="ypp:YPDSF_0066"/>
<dbReference type="PATRIC" id="fig|386656.14.peg.503"/>
<dbReference type="GO" id="GO:0005737">
    <property type="term" value="C:cytoplasm"/>
    <property type="evidence" value="ECO:0007669"/>
    <property type="project" value="UniProtKB-SubCell"/>
</dbReference>
<dbReference type="GO" id="GO:0044183">
    <property type="term" value="F:protein folding chaperone"/>
    <property type="evidence" value="ECO:0007669"/>
    <property type="project" value="TreeGrafter"/>
</dbReference>
<dbReference type="GO" id="GO:0051082">
    <property type="term" value="F:unfolded protein binding"/>
    <property type="evidence" value="ECO:0007669"/>
    <property type="project" value="UniProtKB-UniRule"/>
</dbReference>
<dbReference type="GO" id="GO:0042026">
    <property type="term" value="P:protein refolding"/>
    <property type="evidence" value="ECO:0007669"/>
    <property type="project" value="TreeGrafter"/>
</dbReference>
<dbReference type="CDD" id="cd00498">
    <property type="entry name" value="Hsp33"/>
    <property type="match status" value="1"/>
</dbReference>
<dbReference type="Gene3D" id="1.10.287.480">
    <property type="entry name" value="helix hairpin bin"/>
    <property type="match status" value="1"/>
</dbReference>
<dbReference type="Gene3D" id="3.55.30.10">
    <property type="entry name" value="Hsp33 domain"/>
    <property type="match status" value="1"/>
</dbReference>
<dbReference type="Gene3D" id="3.90.1280.10">
    <property type="entry name" value="HSP33 redox switch-like"/>
    <property type="match status" value="1"/>
</dbReference>
<dbReference type="HAMAP" id="MF_00117">
    <property type="entry name" value="HslO"/>
    <property type="match status" value="1"/>
</dbReference>
<dbReference type="InterPro" id="IPR000397">
    <property type="entry name" value="Heat_shock_Hsp33"/>
</dbReference>
<dbReference type="InterPro" id="IPR016154">
    <property type="entry name" value="Heat_shock_Hsp33_C"/>
</dbReference>
<dbReference type="InterPro" id="IPR016153">
    <property type="entry name" value="Heat_shock_Hsp33_N"/>
</dbReference>
<dbReference type="InterPro" id="IPR023212">
    <property type="entry name" value="Hsp33_helix_hairpin_bin_dom_sf"/>
</dbReference>
<dbReference type="NCBIfam" id="NF001033">
    <property type="entry name" value="PRK00114.1"/>
    <property type="match status" value="1"/>
</dbReference>
<dbReference type="PANTHER" id="PTHR30111">
    <property type="entry name" value="33 KDA CHAPERONIN"/>
    <property type="match status" value="1"/>
</dbReference>
<dbReference type="PANTHER" id="PTHR30111:SF1">
    <property type="entry name" value="33 KDA CHAPERONIN"/>
    <property type="match status" value="1"/>
</dbReference>
<dbReference type="Pfam" id="PF01430">
    <property type="entry name" value="HSP33"/>
    <property type="match status" value="1"/>
</dbReference>
<dbReference type="PIRSF" id="PIRSF005261">
    <property type="entry name" value="Heat_shock_Hsp33"/>
    <property type="match status" value="1"/>
</dbReference>
<dbReference type="SUPFAM" id="SSF64397">
    <property type="entry name" value="Hsp33 domain"/>
    <property type="match status" value="1"/>
</dbReference>
<dbReference type="SUPFAM" id="SSF118352">
    <property type="entry name" value="HSP33 redox switch-like"/>
    <property type="match status" value="1"/>
</dbReference>
<organism>
    <name type="scientific">Yersinia pestis (strain Pestoides F)</name>
    <dbReference type="NCBI Taxonomy" id="386656"/>
    <lineage>
        <taxon>Bacteria</taxon>
        <taxon>Pseudomonadati</taxon>
        <taxon>Pseudomonadota</taxon>
        <taxon>Gammaproteobacteria</taxon>
        <taxon>Enterobacterales</taxon>
        <taxon>Yersiniaceae</taxon>
        <taxon>Yersinia</taxon>
    </lineage>
</organism>
<gene>
    <name evidence="1" type="primary">hslO</name>
    <name type="ordered locus">YPDSF_0066</name>
</gene>